<accession>P29162</accession>
<feature type="signal peptide" evidence="1">
    <location>
        <begin position="1"/>
        <end position="21"/>
    </location>
</feature>
<feature type="chain" id="PRO_0000002909" description="L-ascorbate oxidase homolog">
    <location>
        <begin position="22"/>
        <end position="554"/>
    </location>
</feature>
<feature type="domain" description="Plastocyanin-like 1">
    <location>
        <begin position="22"/>
        <end position="143"/>
    </location>
</feature>
<feature type="domain" description="Plastocyanin-like 2">
    <location>
        <begin position="196"/>
        <end position="296"/>
    </location>
</feature>
<feature type="domain" description="Plastocyanin-like 3">
    <location>
        <begin position="411"/>
        <end position="521"/>
    </location>
</feature>
<feature type="glycosylation site" description="N-linked (GlcNAc...) asparagine" evidence="1">
    <location>
        <position position="31"/>
    </location>
</feature>
<feature type="glycosylation site" description="N-linked (GlcNAc...) asparagine" evidence="1">
    <location>
        <position position="59"/>
    </location>
</feature>
<feature type="glycosylation site" description="N-linked (GlcNAc...) asparagine" evidence="1">
    <location>
        <position position="108"/>
    </location>
</feature>
<feature type="glycosylation site" description="N-linked (GlcNAc...) asparagine" evidence="1">
    <location>
        <position position="332"/>
    </location>
</feature>
<feature type="glycosylation site" description="N-linked (GlcNAc...) asparagine" evidence="1">
    <location>
        <position position="352"/>
    </location>
</feature>
<feature type="glycosylation site" description="N-linked (GlcNAc...) asparagine" evidence="1">
    <location>
        <position position="423"/>
    </location>
</feature>
<feature type="disulfide bond" evidence="1">
    <location>
        <begin position="101"/>
        <end position="540"/>
    </location>
</feature>
<sequence>MGSGKVTFVALLLCLSVGVIAEDPYLYFNWNVTYGTIAPLGVPQQGILINGQFPGPRINCTSNNNIVVNVFNNLDEPFLFTWNGVQHRKNSWQDGTPGTMCPIMPGQNFTYRFQVKDQIGSYSYFPTTALHRAAGGYGALNVHSRALIPVPFDNPADEYNVFVGDWYNKGHKTLKKILDGGRTIGRPDGIIINGKSAKVGEAKEPLFTMEAGKTYRYRFCNLGMRSSVNIRFQGHPMKLVELEGSHTVQNIYDSLDLHVGQCLSVLVTADQEPKDYYLVVSSRFLKQALSSVAIIRYANGKGPASPELPTPPPENTEGIAWSMNQFRSFRWNLTASAARPNPQGSYHYGQINITRTIKIFNSMSQVGGKLRYGLNGISHTNGETPLKLVEYFGATNKAFKYDLMADEAPADPSKLTIATNVKNATYRNFVEIIFENHEKTIRTYHLDGYSFFAVAVEPGRWSPEKRKNYNLVDGLSRNNIQVYPNSWAAIMLTFDNAGMWNLRSEMWEKTYLGEQLYFSVLSPSRSLRDEYNIPDNHPLCGIVKGLSMPAPYKA</sequence>
<keyword id="KW-1015">Disulfide bond</keyword>
<keyword id="KW-0309">Germination</keyword>
<keyword id="KW-0325">Glycoprotein</keyword>
<keyword id="KW-0479">Metal-binding</keyword>
<keyword id="KW-0560">Oxidoreductase</keyword>
<keyword id="KW-1185">Reference proteome</keyword>
<keyword id="KW-0677">Repeat</keyword>
<keyword id="KW-0964">Secreted</keyword>
<keyword id="KW-0732">Signal</keyword>
<dbReference type="EC" id="1.10.3.-"/>
<dbReference type="EMBL" id="X61146">
    <property type="protein sequence ID" value="CAA43454.1"/>
    <property type="molecule type" value="mRNA"/>
</dbReference>
<dbReference type="PIR" id="S22495">
    <property type="entry name" value="S22495"/>
</dbReference>
<dbReference type="RefSeq" id="NP_001311861.1">
    <property type="nucleotide sequence ID" value="NM_001324932.1"/>
</dbReference>
<dbReference type="SMR" id="P29162"/>
<dbReference type="STRING" id="4097.P29162"/>
<dbReference type="PaxDb" id="4097-P29162"/>
<dbReference type="ProMEX" id="P29162"/>
<dbReference type="GeneID" id="107766889"/>
<dbReference type="KEGG" id="nta:107766889"/>
<dbReference type="OMA" id="QSHIMKL"/>
<dbReference type="OrthoDB" id="2121828at2759"/>
<dbReference type="Proteomes" id="UP000084051">
    <property type="component" value="Unplaced"/>
</dbReference>
<dbReference type="GO" id="GO:0005576">
    <property type="term" value="C:extracellular region"/>
    <property type="evidence" value="ECO:0007669"/>
    <property type="project" value="UniProtKB-SubCell"/>
</dbReference>
<dbReference type="GO" id="GO:0005507">
    <property type="term" value="F:copper ion binding"/>
    <property type="evidence" value="ECO:0007669"/>
    <property type="project" value="InterPro"/>
</dbReference>
<dbReference type="GO" id="GO:0016491">
    <property type="term" value="F:oxidoreductase activity"/>
    <property type="evidence" value="ECO:0000318"/>
    <property type="project" value="GO_Central"/>
</dbReference>
<dbReference type="CDD" id="cd13846">
    <property type="entry name" value="CuRO_1_AAO_like_1"/>
    <property type="match status" value="1"/>
</dbReference>
<dbReference type="CDD" id="cd13872">
    <property type="entry name" value="CuRO_2_AAO_like_1"/>
    <property type="match status" value="1"/>
</dbReference>
<dbReference type="Gene3D" id="2.60.40.420">
    <property type="entry name" value="Cupredoxins - blue copper proteins"/>
    <property type="match status" value="3"/>
</dbReference>
<dbReference type="InterPro" id="IPR011707">
    <property type="entry name" value="Cu-oxidase-like_N"/>
</dbReference>
<dbReference type="InterPro" id="IPR001117">
    <property type="entry name" value="Cu-oxidase_2nd"/>
</dbReference>
<dbReference type="InterPro" id="IPR011706">
    <property type="entry name" value="Cu-oxidase_C"/>
</dbReference>
<dbReference type="InterPro" id="IPR045087">
    <property type="entry name" value="Cu-oxidase_fam"/>
</dbReference>
<dbReference type="InterPro" id="IPR008972">
    <property type="entry name" value="Cupredoxin"/>
</dbReference>
<dbReference type="InterPro" id="IPR034273">
    <property type="entry name" value="CuRO_1_AAO-like"/>
</dbReference>
<dbReference type="InterPro" id="IPR034271">
    <property type="entry name" value="CuRO_2_AO-like"/>
</dbReference>
<dbReference type="PANTHER" id="PTHR11709:SF288">
    <property type="entry name" value="L-ASCORBATE OXIDASE HOMOLOG"/>
    <property type="match status" value="1"/>
</dbReference>
<dbReference type="PANTHER" id="PTHR11709">
    <property type="entry name" value="MULTI-COPPER OXIDASE"/>
    <property type="match status" value="1"/>
</dbReference>
<dbReference type="Pfam" id="PF00394">
    <property type="entry name" value="Cu-oxidase"/>
    <property type="match status" value="1"/>
</dbReference>
<dbReference type="Pfam" id="PF07731">
    <property type="entry name" value="Cu-oxidase_2"/>
    <property type="match status" value="1"/>
</dbReference>
<dbReference type="Pfam" id="PF07732">
    <property type="entry name" value="Cu-oxidase_3"/>
    <property type="match status" value="1"/>
</dbReference>
<dbReference type="SUPFAM" id="SSF49503">
    <property type="entry name" value="Cupredoxins"/>
    <property type="match status" value="3"/>
</dbReference>
<evidence type="ECO:0000255" key="1"/>
<evidence type="ECO:0000269" key="2">
    <source>
    </source>
</evidence>
<evidence type="ECO:0000305" key="3"/>
<protein>
    <recommendedName>
        <fullName>L-ascorbate oxidase homolog</fullName>
        <ecNumber>1.10.3.-</ecNumber>
    </recommendedName>
    <alternativeName>
        <fullName>Pollen-specific protein NTP303</fullName>
    </alternativeName>
</protein>
<organism>
    <name type="scientific">Nicotiana tabacum</name>
    <name type="common">Common tobacco</name>
    <dbReference type="NCBI Taxonomy" id="4097"/>
    <lineage>
        <taxon>Eukaryota</taxon>
        <taxon>Viridiplantae</taxon>
        <taxon>Streptophyta</taxon>
        <taxon>Embryophyta</taxon>
        <taxon>Tracheophyta</taxon>
        <taxon>Spermatophyta</taxon>
        <taxon>Magnoliopsida</taxon>
        <taxon>eudicotyledons</taxon>
        <taxon>Gunneridae</taxon>
        <taxon>Pentapetalae</taxon>
        <taxon>asterids</taxon>
        <taxon>lamiids</taxon>
        <taxon>Solanales</taxon>
        <taxon>Solanaceae</taxon>
        <taxon>Nicotianoideae</taxon>
        <taxon>Nicotianeae</taxon>
        <taxon>Nicotiana</taxon>
    </lineage>
</organism>
<comment type="function">
    <text evidence="2">Probable oxidoreductase that may be involved in pollen tube growth.</text>
</comment>
<comment type="subcellular location">
    <subcellularLocation>
        <location evidence="3">Secreted</location>
        <location evidence="3">Extracellular space</location>
    </subcellularLocation>
</comment>
<comment type="tissue specificity">
    <text evidence="2">Pollen.</text>
</comment>
<comment type="developmental stage">
    <text evidence="2">Appears after the first haploid mitosis and are expressed during microgametogenesis, germination and tube growth.</text>
</comment>
<comment type="induction">
    <text evidence="2">Expression regulated by the haploid gametophyte itself.</text>
</comment>
<comment type="similarity">
    <text evidence="3">Belongs to the multicopper oxidase family.</text>
</comment>
<name>ASOL_TOBAC</name>
<reference key="1">
    <citation type="journal article" date="1992" name="Plant Mol. Biol.">
        <title>Characterization of a pollen-specific cDNA clone from Nicotiana tabacum expressed during microgametogenesis and germination.</title>
        <authorList>
            <person name="Weterings K."/>
            <person name="Reijnen W."/>
            <person name="van Aarssen R."/>
            <person name="Kortstee A."/>
            <person name="Spijkers J."/>
            <person name="van Herpen M."/>
            <person name="Schrauwen J."/>
            <person name="Wullems G."/>
        </authorList>
    </citation>
    <scope>NUCLEOTIDE SEQUENCE [MRNA]</scope>
    <scope>FUNCTION</scope>
    <scope>TISSUE SPECIFICITY</scope>
    <scope>DEVELOPMENTAL STAGE</scope>
    <scope>INDUCTION</scope>
    <source>
        <strain>cv. Petit Havana SR1</strain>
        <tissue>Pollen</tissue>
    </source>
</reference>
<proteinExistence type="evidence at transcript level"/>